<protein>
    <recommendedName>
        <fullName>C-X-C motif chemokine 3</fullName>
    </recommendedName>
    <alternativeName>
        <fullName evidence="5">Dendritic cell inflammatory protein 1</fullName>
    </alternativeName>
</protein>
<accession>Q6W5C0</accession>
<accession>Q3UNK9</accession>
<feature type="signal peptide" evidence="2">
    <location>
        <begin position="1"/>
        <end position="31"/>
    </location>
</feature>
<feature type="chain" id="PRO_5000091636" description="C-X-C motif chemokine 3" evidence="2">
    <location>
        <begin position="32"/>
        <end position="100"/>
    </location>
</feature>
<feature type="disulfide bond" evidence="1">
    <location>
        <begin position="36"/>
        <end position="62"/>
    </location>
</feature>
<feature type="disulfide bond" evidence="1">
    <location>
        <begin position="38"/>
        <end position="78"/>
    </location>
</feature>
<dbReference type="EMBL" id="AY311403">
    <property type="protein sequence ID" value="AAQ86936.1"/>
    <property type="molecule type" value="mRNA"/>
</dbReference>
<dbReference type="EMBL" id="AY311404">
    <property type="protein sequence ID" value="AAQ86937.1"/>
    <property type="molecule type" value="Genomic_DNA"/>
</dbReference>
<dbReference type="EMBL" id="AK144158">
    <property type="protein sequence ID" value="BAE25738.1"/>
    <property type="status" value="ALT_FRAME"/>
    <property type="molecule type" value="mRNA"/>
</dbReference>
<dbReference type="EMBL" id="AK150314">
    <property type="protein sequence ID" value="BAE29460.1"/>
    <property type="molecule type" value="mRNA"/>
</dbReference>
<dbReference type="EMBL" id="AK154334">
    <property type="protein sequence ID" value="BAE32520.1"/>
    <property type="molecule type" value="mRNA"/>
</dbReference>
<dbReference type="EMBL" id="CH466617">
    <property type="protein sequence ID" value="EDL05303.1"/>
    <property type="molecule type" value="Genomic_DNA"/>
</dbReference>
<dbReference type="EMBL" id="BC117014">
    <property type="protein sequence ID" value="AAI17015.1"/>
    <property type="molecule type" value="mRNA"/>
</dbReference>
<dbReference type="EMBL" id="BC117016">
    <property type="protein sequence ID" value="AAI17017.1"/>
    <property type="molecule type" value="mRNA"/>
</dbReference>
<dbReference type="CCDS" id="CCDS19417.1"/>
<dbReference type="RefSeq" id="NP_976065.1">
    <property type="nucleotide sequence ID" value="NM_203320.3"/>
</dbReference>
<dbReference type="SMR" id="Q6W5C0"/>
<dbReference type="FunCoup" id="Q6W5C0">
    <property type="interactions" value="1076"/>
</dbReference>
<dbReference type="STRING" id="10090.ENSMUSP00000031326"/>
<dbReference type="iPTMnet" id="Q6W5C0"/>
<dbReference type="PhosphoSitePlus" id="Q6W5C0"/>
<dbReference type="PaxDb" id="10090-ENSMUSP00000031326"/>
<dbReference type="ProteomicsDB" id="279220"/>
<dbReference type="DNASU" id="330122"/>
<dbReference type="Ensembl" id="ENSMUST00000031326.10">
    <property type="protein sequence ID" value="ENSMUSP00000031326.9"/>
    <property type="gene ID" value="ENSMUSG00000029379.11"/>
</dbReference>
<dbReference type="GeneID" id="330122"/>
<dbReference type="KEGG" id="mmu:330122"/>
<dbReference type="UCSC" id="uc008ybj.2">
    <property type="organism name" value="mouse"/>
</dbReference>
<dbReference type="AGR" id="MGI:3037818"/>
<dbReference type="CTD" id="2921"/>
<dbReference type="MGI" id="MGI:3037818">
    <property type="gene designation" value="Cxcl3"/>
</dbReference>
<dbReference type="VEuPathDB" id="HostDB:ENSMUSG00000029379"/>
<dbReference type="eggNOG" id="ENOG502S7MM">
    <property type="taxonomic scope" value="Eukaryota"/>
</dbReference>
<dbReference type="GeneTree" id="ENSGT00940000155233"/>
<dbReference type="HOGENOM" id="CLU_143902_3_1_1"/>
<dbReference type="InParanoid" id="Q6W5C0"/>
<dbReference type="OMA" id="PSCANVE"/>
<dbReference type="OrthoDB" id="8872899at2759"/>
<dbReference type="PhylomeDB" id="Q6W5C0"/>
<dbReference type="TreeFam" id="TF333433"/>
<dbReference type="Reactome" id="R-MMU-380108">
    <property type="pathway name" value="Chemokine receptors bind chemokines"/>
</dbReference>
<dbReference type="Reactome" id="R-MMU-418594">
    <property type="pathway name" value="G alpha (i) signalling events"/>
</dbReference>
<dbReference type="BioGRID-ORCS" id="330122">
    <property type="hits" value="0 hits in 75 CRISPR screens"/>
</dbReference>
<dbReference type="PRO" id="PR:Q6W5C0"/>
<dbReference type="Proteomes" id="UP000000589">
    <property type="component" value="Chromosome 5"/>
</dbReference>
<dbReference type="RNAct" id="Q6W5C0">
    <property type="molecule type" value="protein"/>
</dbReference>
<dbReference type="Bgee" id="ENSMUSG00000029379">
    <property type="expression patterns" value="Expressed in endothelial cell of lymphatic vessel and 25 other cell types or tissues"/>
</dbReference>
<dbReference type="GO" id="GO:0005615">
    <property type="term" value="C:extracellular space"/>
    <property type="evidence" value="ECO:0000250"/>
    <property type="project" value="UniProtKB"/>
</dbReference>
<dbReference type="GO" id="GO:0008009">
    <property type="term" value="F:chemokine activity"/>
    <property type="evidence" value="ECO:0000314"/>
    <property type="project" value="UniProtKB"/>
</dbReference>
<dbReference type="GO" id="GO:0071222">
    <property type="term" value="P:cellular response to lipopolysaccharide"/>
    <property type="evidence" value="ECO:0007669"/>
    <property type="project" value="Ensembl"/>
</dbReference>
<dbReference type="GO" id="GO:0006955">
    <property type="term" value="P:immune response"/>
    <property type="evidence" value="ECO:0007669"/>
    <property type="project" value="InterPro"/>
</dbReference>
<dbReference type="GO" id="GO:0006954">
    <property type="term" value="P:inflammatory response"/>
    <property type="evidence" value="ECO:0007669"/>
    <property type="project" value="UniProtKB-KW"/>
</dbReference>
<dbReference type="GO" id="GO:0030593">
    <property type="term" value="P:neutrophil chemotaxis"/>
    <property type="evidence" value="ECO:0000314"/>
    <property type="project" value="UniProtKB"/>
</dbReference>
<dbReference type="GO" id="GO:0007204">
    <property type="term" value="P:positive regulation of cytosolic calcium ion concentration"/>
    <property type="evidence" value="ECO:0007669"/>
    <property type="project" value="Ensembl"/>
</dbReference>
<dbReference type="CDD" id="cd00273">
    <property type="entry name" value="Chemokine_CXC"/>
    <property type="match status" value="1"/>
</dbReference>
<dbReference type="FunFam" id="2.40.50.40:FF:000004">
    <property type="entry name" value="C-X-C motif chemokine"/>
    <property type="match status" value="1"/>
</dbReference>
<dbReference type="Gene3D" id="2.40.50.40">
    <property type="match status" value="1"/>
</dbReference>
<dbReference type="InterPro" id="IPR039809">
    <property type="entry name" value="Chemokine_b/g/d"/>
</dbReference>
<dbReference type="InterPro" id="IPR001089">
    <property type="entry name" value="Chemokine_CXC"/>
</dbReference>
<dbReference type="InterPro" id="IPR018048">
    <property type="entry name" value="Chemokine_CXC_CS"/>
</dbReference>
<dbReference type="InterPro" id="IPR001811">
    <property type="entry name" value="Chemokine_IL8-like_dom"/>
</dbReference>
<dbReference type="InterPro" id="IPR033899">
    <property type="entry name" value="CXC_Chemokine_domain"/>
</dbReference>
<dbReference type="InterPro" id="IPR036048">
    <property type="entry name" value="Interleukin_8-like_sf"/>
</dbReference>
<dbReference type="PANTHER" id="PTHR12015:SF207">
    <property type="entry name" value="C-X-C MOTIF CHEMOKINE 3"/>
    <property type="match status" value="1"/>
</dbReference>
<dbReference type="PANTHER" id="PTHR12015">
    <property type="entry name" value="SMALL INDUCIBLE CYTOKINE A"/>
    <property type="match status" value="1"/>
</dbReference>
<dbReference type="Pfam" id="PF00048">
    <property type="entry name" value="IL8"/>
    <property type="match status" value="1"/>
</dbReference>
<dbReference type="PRINTS" id="PR00436">
    <property type="entry name" value="INTERLEUKIN8"/>
</dbReference>
<dbReference type="PRINTS" id="PR00437">
    <property type="entry name" value="SMALLCYTKCXC"/>
</dbReference>
<dbReference type="SMART" id="SM00199">
    <property type="entry name" value="SCY"/>
    <property type="match status" value="1"/>
</dbReference>
<dbReference type="SUPFAM" id="SSF54117">
    <property type="entry name" value="Interleukin 8-like chemokines"/>
    <property type="match status" value="1"/>
</dbReference>
<dbReference type="PROSITE" id="PS00471">
    <property type="entry name" value="SMALL_CYTOKINES_CXC"/>
    <property type="match status" value="1"/>
</dbReference>
<gene>
    <name evidence="12" type="primary">Cxcl3</name>
    <name evidence="9" type="synonym">Dcip1</name>
    <name evidence="12" type="synonym">Gm1960</name>
</gene>
<reference evidence="6 8" key="1">
    <citation type="journal article" date="2004" name="J. Immunol.">
        <title>IL-10-conditioned dendritic cells, decommissioned for recruitment of adaptive immunity, elicit innate inflammatory gene products in response to danger signals.</title>
        <authorList>
            <person name="Nolan K.F."/>
            <person name="Strong V."/>
            <person name="Soler D."/>
            <person name="Fairchild P.J."/>
            <person name="Cobbold S.P."/>
            <person name="Croxton R."/>
            <person name="Gonzalo J.-A."/>
            <person name="Rubio A."/>
            <person name="Wells M."/>
            <person name="Waldmann H."/>
        </authorList>
    </citation>
    <scope>NUCLEOTIDE SEQUENCE [GENOMIC DNA / MRNA]</scope>
    <scope>FUNCTION</scope>
    <scope>INDUCTION</scope>
    <source>
        <strain evidence="9">129/Sv X 129SvCp</strain>
        <strain evidence="8">CBA/CaJ</strain>
        <tissue evidence="8">Dendritic cell</tissue>
    </source>
</reference>
<reference evidence="10" key="2">
    <citation type="journal article" date="2005" name="Science">
        <title>The transcriptional landscape of the mammalian genome.</title>
        <authorList>
            <person name="Carninci P."/>
            <person name="Kasukawa T."/>
            <person name="Katayama S."/>
            <person name="Gough J."/>
            <person name="Frith M.C."/>
            <person name="Maeda N."/>
            <person name="Oyama R."/>
            <person name="Ravasi T."/>
            <person name="Lenhard B."/>
            <person name="Wells C."/>
            <person name="Kodzius R."/>
            <person name="Shimokawa K."/>
            <person name="Bajic V.B."/>
            <person name="Brenner S.E."/>
            <person name="Batalov S."/>
            <person name="Forrest A.R."/>
            <person name="Zavolan M."/>
            <person name="Davis M.J."/>
            <person name="Wilming L.G."/>
            <person name="Aidinis V."/>
            <person name="Allen J.E."/>
            <person name="Ambesi-Impiombato A."/>
            <person name="Apweiler R."/>
            <person name="Aturaliya R.N."/>
            <person name="Bailey T.L."/>
            <person name="Bansal M."/>
            <person name="Baxter L."/>
            <person name="Beisel K.W."/>
            <person name="Bersano T."/>
            <person name="Bono H."/>
            <person name="Chalk A.M."/>
            <person name="Chiu K.P."/>
            <person name="Choudhary V."/>
            <person name="Christoffels A."/>
            <person name="Clutterbuck D.R."/>
            <person name="Crowe M.L."/>
            <person name="Dalla E."/>
            <person name="Dalrymple B.P."/>
            <person name="de Bono B."/>
            <person name="Della Gatta G."/>
            <person name="di Bernardo D."/>
            <person name="Down T."/>
            <person name="Engstrom P."/>
            <person name="Fagiolini M."/>
            <person name="Faulkner G."/>
            <person name="Fletcher C.F."/>
            <person name="Fukushima T."/>
            <person name="Furuno M."/>
            <person name="Futaki S."/>
            <person name="Gariboldi M."/>
            <person name="Georgii-Hemming P."/>
            <person name="Gingeras T.R."/>
            <person name="Gojobori T."/>
            <person name="Green R.E."/>
            <person name="Gustincich S."/>
            <person name="Harbers M."/>
            <person name="Hayashi Y."/>
            <person name="Hensch T.K."/>
            <person name="Hirokawa N."/>
            <person name="Hill D."/>
            <person name="Huminiecki L."/>
            <person name="Iacono M."/>
            <person name="Ikeo K."/>
            <person name="Iwama A."/>
            <person name="Ishikawa T."/>
            <person name="Jakt M."/>
            <person name="Kanapin A."/>
            <person name="Katoh M."/>
            <person name="Kawasawa Y."/>
            <person name="Kelso J."/>
            <person name="Kitamura H."/>
            <person name="Kitano H."/>
            <person name="Kollias G."/>
            <person name="Krishnan S.P."/>
            <person name="Kruger A."/>
            <person name="Kummerfeld S.K."/>
            <person name="Kurochkin I.V."/>
            <person name="Lareau L.F."/>
            <person name="Lazarevic D."/>
            <person name="Lipovich L."/>
            <person name="Liu J."/>
            <person name="Liuni S."/>
            <person name="McWilliam S."/>
            <person name="Madan Babu M."/>
            <person name="Madera M."/>
            <person name="Marchionni L."/>
            <person name="Matsuda H."/>
            <person name="Matsuzawa S."/>
            <person name="Miki H."/>
            <person name="Mignone F."/>
            <person name="Miyake S."/>
            <person name="Morris K."/>
            <person name="Mottagui-Tabar S."/>
            <person name="Mulder N."/>
            <person name="Nakano N."/>
            <person name="Nakauchi H."/>
            <person name="Ng P."/>
            <person name="Nilsson R."/>
            <person name="Nishiguchi S."/>
            <person name="Nishikawa S."/>
            <person name="Nori F."/>
            <person name="Ohara O."/>
            <person name="Okazaki Y."/>
            <person name="Orlando V."/>
            <person name="Pang K.C."/>
            <person name="Pavan W.J."/>
            <person name="Pavesi G."/>
            <person name="Pesole G."/>
            <person name="Petrovsky N."/>
            <person name="Piazza S."/>
            <person name="Reed J."/>
            <person name="Reid J.F."/>
            <person name="Ring B.Z."/>
            <person name="Ringwald M."/>
            <person name="Rost B."/>
            <person name="Ruan Y."/>
            <person name="Salzberg S.L."/>
            <person name="Sandelin A."/>
            <person name="Schneider C."/>
            <person name="Schoenbach C."/>
            <person name="Sekiguchi K."/>
            <person name="Semple C.A."/>
            <person name="Seno S."/>
            <person name="Sessa L."/>
            <person name="Sheng Y."/>
            <person name="Shibata Y."/>
            <person name="Shimada H."/>
            <person name="Shimada K."/>
            <person name="Silva D."/>
            <person name="Sinclair B."/>
            <person name="Sperling S."/>
            <person name="Stupka E."/>
            <person name="Sugiura K."/>
            <person name="Sultana R."/>
            <person name="Takenaka Y."/>
            <person name="Taki K."/>
            <person name="Tammoja K."/>
            <person name="Tan S.L."/>
            <person name="Tang S."/>
            <person name="Taylor M.S."/>
            <person name="Tegner J."/>
            <person name="Teichmann S.A."/>
            <person name="Ueda H.R."/>
            <person name="van Nimwegen E."/>
            <person name="Verardo R."/>
            <person name="Wei C.L."/>
            <person name="Yagi K."/>
            <person name="Yamanishi H."/>
            <person name="Zabarovsky E."/>
            <person name="Zhu S."/>
            <person name="Zimmer A."/>
            <person name="Hide W."/>
            <person name="Bult C."/>
            <person name="Grimmond S.M."/>
            <person name="Teasdale R.D."/>
            <person name="Liu E.T."/>
            <person name="Brusic V."/>
            <person name="Quackenbush J."/>
            <person name="Wahlestedt C."/>
            <person name="Mattick J.S."/>
            <person name="Hume D.A."/>
            <person name="Kai C."/>
            <person name="Sasaki D."/>
            <person name="Tomaru Y."/>
            <person name="Fukuda S."/>
            <person name="Kanamori-Katayama M."/>
            <person name="Suzuki M."/>
            <person name="Aoki J."/>
            <person name="Arakawa T."/>
            <person name="Iida J."/>
            <person name="Imamura K."/>
            <person name="Itoh M."/>
            <person name="Kato T."/>
            <person name="Kawaji H."/>
            <person name="Kawagashira N."/>
            <person name="Kawashima T."/>
            <person name="Kojima M."/>
            <person name="Kondo S."/>
            <person name="Konno H."/>
            <person name="Nakano K."/>
            <person name="Ninomiya N."/>
            <person name="Nishio T."/>
            <person name="Okada M."/>
            <person name="Plessy C."/>
            <person name="Shibata K."/>
            <person name="Shiraki T."/>
            <person name="Suzuki S."/>
            <person name="Tagami M."/>
            <person name="Waki K."/>
            <person name="Watahiki A."/>
            <person name="Okamura-Oho Y."/>
            <person name="Suzuki H."/>
            <person name="Kawai J."/>
            <person name="Hayashizaki Y."/>
        </authorList>
    </citation>
    <scope>NUCLEOTIDE SEQUENCE [LARGE SCALE MRNA]</scope>
    <source>
        <strain evidence="10">C57BL/6J</strain>
        <strain evidence="11">NOD</strain>
        <tissue evidence="10">Bone marrow macrophage</tissue>
        <tissue evidence="11">Dendritic cell</tissue>
    </source>
</reference>
<reference key="3">
    <citation type="submission" date="2005-09" db="EMBL/GenBank/DDBJ databases">
        <authorList>
            <person name="Mural R.J."/>
            <person name="Adams M.D."/>
            <person name="Myers E.W."/>
            <person name="Smith H.O."/>
            <person name="Venter J.C."/>
        </authorList>
    </citation>
    <scope>NUCLEOTIDE SEQUENCE [LARGE SCALE GENOMIC DNA]</scope>
</reference>
<reference evidence="7" key="4">
    <citation type="journal article" date="2004" name="Genome Res.">
        <title>The status, quality, and expansion of the NIH full-length cDNA project: the Mammalian Gene Collection (MGC).</title>
        <authorList>
            <consortium name="The MGC Project Team"/>
        </authorList>
    </citation>
    <scope>NUCLEOTIDE SEQUENCE [LARGE SCALE MRNA]</scope>
</reference>
<comment type="function">
    <text evidence="2 4">Ligand for CXCR2. Has chemotactic activity for neutrophils. May play a role in inflammation and exert its effects on endothelial cells in an autocrine fashion.</text>
</comment>
<comment type="subcellular location">
    <subcellularLocation>
        <location evidence="2">Secreted</location>
    </subcellularLocation>
</comment>
<comment type="induction">
    <text evidence="4">By lipopolysaccharide.</text>
</comment>
<comment type="similarity">
    <text evidence="3">Belongs to the intercrine alpha (chemokine CxC) family.</text>
</comment>
<comment type="sequence caution" evidence="6">
    <conflict type="frameshift">
        <sequence resource="EMBL-CDS" id="BAE25738"/>
    </conflict>
</comment>
<name>CXCL3_MOUSE</name>
<organism>
    <name type="scientific">Mus musculus</name>
    <name type="common">Mouse</name>
    <dbReference type="NCBI Taxonomy" id="10090"/>
    <lineage>
        <taxon>Eukaryota</taxon>
        <taxon>Metazoa</taxon>
        <taxon>Chordata</taxon>
        <taxon>Craniata</taxon>
        <taxon>Vertebrata</taxon>
        <taxon>Euteleostomi</taxon>
        <taxon>Mammalia</taxon>
        <taxon>Eutheria</taxon>
        <taxon>Euarchontoglires</taxon>
        <taxon>Glires</taxon>
        <taxon>Rodentia</taxon>
        <taxon>Myomorpha</taxon>
        <taxon>Muroidea</taxon>
        <taxon>Muridae</taxon>
        <taxon>Murinae</taxon>
        <taxon>Mus</taxon>
        <taxon>Mus</taxon>
    </lineage>
</organism>
<evidence type="ECO:0000250" key="1"/>
<evidence type="ECO:0000250" key="2">
    <source>
        <dbReference type="UniProtKB" id="Q10746"/>
    </source>
</evidence>
<evidence type="ECO:0000255" key="3"/>
<evidence type="ECO:0000269" key="4">
    <source>
    </source>
</evidence>
<evidence type="ECO:0000303" key="5">
    <source>
    </source>
</evidence>
<evidence type="ECO:0000305" key="6"/>
<evidence type="ECO:0000312" key="7">
    <source>
        <dbReference type="EMBL" id="AAI17015.1"/>
    </source>
</evidence>
<evidence type="ECO:0000312" key="8">
    <source>
        <dbReference type="EMBL" id="AAQ86936.1"/>
    </source>
</evidence>
<evidence type="ECO:0000312" key="9">
    <source>
        <dbReference type="EMBL" id="AAQ86937.1"/>
    </source>
</evidence>
<evidence type="ECO:0000312" key="10">
    <source>
        <dbReference type="EMBL" id="BAE29460.1"/>
    </source>
</evidence>
<evidence type="ECO:0000312" key="11">
    <source>
        <dbReference type="EMBL" id="BAE32520.1"/>
    </source>
</evidence>
<evidence type="ECO:0000312" key="12">
    <source>
        <dbReference type="MGI" id="MGI:3037818"/>
    </source>
</evidence>
<sequence>MAPPTCRLLSAALVLLLLLATNHQATGAVVASELRCQCLNTLPRVDFETIQSLTVTPPGPHCTQTEVIATLKDGQEVCLNPQGPRLQIIIKKILKSGKSS</sequence>
<proteinExistence type="evidence at transcript level"/>
<keyword id="KW-0145">Chemotaxis</keyword>
<keyword id="KW-0202">Cytokine</keyword>
<keyword id="KW-1015">Disulfide bond</keyword>
<keyword id="KW-0395">Inflammatory response</keyword>
<keyword id="KW-1185">Reference proteome</keyword>
<keyword id="KW-0964">Secreted</keyword>
<keyword id="KW-0732">Signal</keyword>